<organism>
    <name type="scientific">Enterococcus faecalis (strain ATCC 47077 / OG1RF)</name>
    <dbReference type="NCBI Taxonomy" id="474186"/>
    <lineage>
        <taxon>Bacteria</taxon>
        <taxon>Bacillati</taxon>
        <taxon>Bacillota</taxon>
        <taxon>Bacilli</taxon>
        <taxon>Lactobacillales</taxon>
        <taxon>Enterococcaceae</taxon>
        <taxon>Enterococcus</taxon>
    </lineage>
</organism>
<sequence>MKLTVTLPTHSYDLTIETGALDKIGTWVRSLWQPQRVAIITDETVNKLYGAAVEKELQAAGFETSLIAVAAGEQSKSLETAQLLYDFLAEQQLTRSDGLIALGGGVVGDLAGFVASTYMRGIHFLQVPTTLLAQVDSSIGGKTAVNTKKAKNLVGTFAQPDGVLIDPNTLKTLEPRRVREGIAEIVKSAAIADVELWHRLSSLENEQDLVAHAEEIITACCKIKRDVVEEDELDLGLRLILNFGHTIGHALENTAGYGVIAHGEGVSLGMIQITQVAEQQGLSPLGTTQELVTMLEKFHLPVTTDRWSEERLYQAITHDKKTRGGQIKIIVLEKIGQAKIVSLPTEEIRAFLNREGGI</sequence>
<name>AROB_ENTFO</name>
<proteinExistence type="inferred from homology"/>
<feature type="chain" id="PRO_0000412116" description="3-dehydroquinate synthase">
    <location>
        <begin position="1"/>
        <end position="358"/>
    </location>
</feature>
<feature type="binding site" evidence="1">
    <location>
        <begin position="105"/>
        <end position="109"/>
    </location>
    <ligand>
        <name>NAD(+)</name>
        <dbReference type="ChEBI" id="CHEBI:57540"/>
    </ligand>
</feature>
<feature type="binding site" evidence="1">
    <location>
        <begin position="129"/>
        <end position="130"/>
    </location>
    <ligand>
        <name>NAD(+)</name>
        <dbReference type="ChEBI" id="CHEBI:57540"/>
    </ligand>
</feature>
<feature type="binding site" evidence="1">
    <location>
        <position position="142"/>
    </location>
    <ligand>
        <name>NAD(+)</name>
        <dbReference type="ChEBI" id="CHEBI:57540"/>
    </ligand>
</feature>
<feature type="binding site" evidence="1">
    <location>
        <position position="151"/>
    </location>
    <ligand>
        <name>NAD(+)</name>
        <dbReference type="ChEBI" id="CHEBI:57540"/>
    </ligand>
</feature>
<feature type="binding site" evidence="1">
    <location>
        <begin position="169"/>
        <end position="172"/>
    </location>
    <ligand>
        <name>NAD(+)</name>
        <dbReference type="ChEBI" id="CHEBI:57540"/>
    </ligand>
</feature>
<feature type="binding site" evidence="1">
    <location>
        <position position="184"/>
    </location>
    <ligand>
        <name>Zn(2+)</name>
        <dbReference type="ChEBI" id="CHEBI:29105"/>
    </ligand>
</feature>
<feature type="binding site" evidence="1">
    <location>
        <position position="245"/>
    </location>
    <ligand>
        <name>Zn(2+)</name>
        <dbReference type="ChEBI" id="CHEBI:29105"/>
    </ligand>
</feature>
<feature type="binding site" evidence="1">
    <location>
        <position position="262"/>
    </location>
    <ligand>
        <name>Zn(2+)</name>
        <dbReference type="ChEBI" id="CHEBI:29105"/>
    </ligand>
</feature>
<feature type="sequence conflict" description="In Ref. 1; AAG53675." evidence="2" ref="1">
    <original>T</original>
    <variation>I</variation>
    <location>
        <position position="80"/>
    </location>
</feature>
<comment type="function">
    <text evidence="1">Catalyzes the conversion of 3-deoxy-D-arabino-heptulosonate 7-phosphate (DAHP) to dehydroquinate (DHQ).</text>
</comment>
<comment type="catalytic activity">
    <reaction evidence="1">
        <text>7-phospho-2-dehydro-3-deoxy-D-arabino-heptonate = 3-dehydroquinate + phosphate</text>
        <dbReference type="Rhea" id="RHEA:21968"/>
        <dbReference type="ChEBI" id="CHEBI:32364"/>
        <dbReference type="ChEBI" id="CHEBI:43474"/>
        <dbReference type="ChEBI" id="CHEBI:58394"/>
        <dbReference type="EC" id="4.2.3.4"/>
    </reaction>
</comment>
<comment type="cofactor">
    <cofactor evidence="1">
        <name>NAD(+)</name>
        <dbReference type="ChEBI" id="CHEBI:57540"/>
    </cofactor>
</comment>
<comment type="cofactor">
    <cofactor evidence="1">
        <name>Co(2+)</name>
        <dbReference type="ChEBI" id="CHEBI:48828"/>
    </cofactor>
    <cofactor evidence="1">
        <name>Zn(2+)</name>
        <dbReference type="ChEBI" id="CHEBI:29105"/>
    </cofactor>
    <text evidence="1">Binds 1 divalent metal cation per subunit. Can use either Co(2+) or Zn(2+).</text>
</comment>
<comment type="pathway">
    <text evidence="1">Metabolic intermediate biosynthesis; chorismate biosynthesis; chorismate from D-erythrose 4-phosphate and phosphoenolpyruvate: step 2/7.</text>
</comment>
<comment type="subcellular location">
    <subcellularLocation>
        <location evidence="1">Cytoplasm</location>
    </subcellularLocation>
</comment>
<comment type="similarity">
    <text evidence="1">Belongs to the sugar phosphate cyclases superfamily. Dehydroquinate synthase family.</text>
</comment>
<reference key="1">
    <citation type="journal article" date="2001" name="Mol. Microbiol.">
        <title>Extracellular superoxide production by Enterococcus faecalis requires demethylmenaquinone and is attenuated by functional terminal quinol oxidases.</title>
        <authorList>
            <person name="Huycke M.M."/>
            <person name="Moore D."/>
            <person name="Joyce W."/>
            <person name="Wise P."/>
            <person name="Shepard L."/>
            <person name="Kotake Y."/>
            <person name="Gilmore M.S."/>
        </authorList>
    </citation>
    <scope>NUCLEOTIDE SEQUENCE [GENOMIC DNA]</scope>
    <source>
        <strain>ATCC 47077 / OG1RF</strain>
    </source>
</reference>
<reference key="2">
    <citation type="journal article" date="2008" name="Genome Biol.">
        <title>Large scale variation in Enterococcus faecalis illustrated by the genome analysis of strain OG1RF.</title>
        <authorList>
            <person name="Bourgogne A."/>
            <person name="Garsin D.A."/>
            <person name="Qin X."/>
            <person name="Singh K.V."/>
            <person name="Sillanpaa J."/>
            <person name="Yerrapragada S."/>
            <person name="Ding Y."/>
            <person name="Dugan-Rocha S."/>
            <person name="Buhay C."/>
            <person name="Shen H."/>
            <person name="Chen G."/>
            <person name="Williams G."/>
            <person name="Muzny D."/>
            <person name="Maadani A."/>
            <person name="Fox K.A."/>
            <person name="Gioia J."/>
            <person name="Chen L."/>
            <person name="Shang Y."/>
            <person name="Arias C.A."/>
            <person name="Nallapareddy S.R."/>
            <person name="Zhao M."/>
            <person name="Prakash V.P."/>
            <person name="Chowdhury S."/>
            <person name="Jiang H."/>
            <person name="Gibbs R.A."/>
            <person name="Murray B.E."/>
            <person name="Highlander S.K."/>
            <person name="Weinstock G.M."/>
        </authorList>
    </citation>
    <scope>NUCLEOTIDE SEQUENCE [LARGE SCALE GENOMIC DNA]</scope>
    <source>
        <strain>ATCC 47077 / OG1RF</strain>
    </source>
</reference>
<protein>
    <recommendedName>
        <fullName evidence="1">3-dehydroquinate synthase</fullName>
        <shortName evidence="1">DHQS</shortName>
        <ecNumber evidence="1">4.2.3.4</ecNumber>
    </recommendedName>
</protein>
<dbReference type="EC" id="4.2.3.4" evidence="1"/>
<dbReference type="EMBL" id="AF318277">
    <property type="protein sequence ID" value="AAG53675.1"/>
    <property type="molecule type" value="Genomic_DNA"/>
</dbReference>
<dbReference type="EMBL" id="CP002621">
    <property type="protein sequence ID" value="AEA93969.1"/>
    <property type="molecule type" value="Genomic_DNA"/>
</dbReference>
<dbReference type="RefSeq" id="WP_002357583.1">
    <property type="nucleotide sequence ID" value="NZ_JAWXYD010000001.1"/>
</dbReference>
<dbReference type="SMR" id="F2MTI0"/>
<dbReference type="GeneID" id="60893868"/>
<dbReference type="KEGG" id="efi:OG1RF_11282"/>
<dbReference type="HOGENOM" id="CLU_001201_0_1_9"/>
<dbReference type="UniPathway" id="UPA00053">
    <property type="reaction ID" value="UER00085"/>
</dbReference>
<dbReference type="GO" id="GO:0005737">
    <property type="term" value="C:cytoplasm"/>
    <property type="evidence" value="ECO:0007669"/>
    <property type="project" value="UniProtKB-SubCell"/>
</dbReference>
<dbReference type="GO" id="GO:0003856">
    <property type="term" value="F:3-dehydroquinate synthase activity"/>
    <property type="evidence" value="ECO:0007669"/>
    <property type="project" value="UniProtKB-UniRule"/>
</dbReference>
<dbReference type="GO" id="GO:0046872">
    <property type="term" value="F:metal ion binding"/>
    <property type="evidence" value="ECO:0007669"/>
    <property type="project" value="UniProtKB-KW"/>
</dbReference>
<dbReference type="GO" id="GO:0000166">
    <property type="term" value="F:nucleotide binding"/>
    <property type="evidence" value="ECO:0007669"/>
    <property type="project" value="UniProtKB-KW"/>
</dbReference>
<dbReference type="GO" id="GO:0008652">
    <property type="term" value="P:amino acid biosynthetic process"/>
    <property type="evidence" value="ECO:0007669"/>
    <property type="project" value="UniProtKB-KW"/>
</dbReference>
<dbReference type="GO" id="GO:0009073">
    <property type="term" value="P:aromatic amino acid family biosynthetic process"/>
    <property type="evidence" value="ECO:0007669"/>
    <property type="project" value="UniProtKB-KW"/>
</dbReference>
<dbReference type="GO" id="GO:0009423">
    <property type="term" value="P:chorismate biosynthetic process"/>
    <property type="evidence" value="ECO:0007669"/>
    <property type="project" value="UniProtKB-UniRule"/>
</dbReference>
<dbReference type="CDD" id="cd08195">
    <property type="entry name" value="DHQS"/>
    <property type="match status" value="1"/>
</dbReference>
<dbReference type="FunFam" id="3.40.50.1970:FF:000001">
    <property type="entry name" value="3-dehydroquinate synthase"/>
    <property type="match status" value="1"/>
</dbReference>
<dbReference type="Gene3D" id="3.40.50.1970">
    <property type="match status" value="1"/>
</dbReference>
<dbReference type="Gene3D" id="1.20.1090.10">
    <property type="entry name" value="Dehydroquinate synthase-like - alpha domain"/>
    <property type="match status" value="1"/>
</dbReference>
<dbReference type="HAMAP" id="MF_00110">
    <property type="entry name" value="DHQ_synthase"/>
    <property type="match status" value="1"/>
</dbReference>
<dbReference type="InterPro" id="IPR050071">
    <property type="entry name" value="Dehydroquinate_synthase"/>
</dbReference>
<dbReference type="InterPro" id="IPR016037">
    <property type="entry name" value="DHQ_synth_AroB"/>
</dbReference>
<dbReference type="InterPro" id="IPR030963">
    <property type="entry name" value="DHQ_synth_fam"/>
</dbReference>
<dbReference type="InterPro" id="IPR030960">
    <property type="entry name" value="DHQS/DOIS_N"/>
</dbReference>
<dbReference type="InterPro" id="IPR056179">
    <property type="entry name" value="DHQS_C"/>
</dbReference>
<dbReference type="NCBIfam" id="TIGR01357">
    <property type="entry name" value="aroB"/>
    <property type="match status" value="1"/>
</dbReference>
<dbReference type="PANTHER" id="PTHR43622">
    <property type="entry name" value="3-DEHYDROQUINATE SYNTHASE"/>
    <property type="match status" value="1"/>
</dbReference>
<dbReference type="PANTHER" id="PTHR43622:SF7">
    <property type="entry name" value="3-DEHYDROQUINATE SYNTHASE, CHLOROPLASTIC"/>
    <property type="match status" value="1"/>
</dbReference>
<dbReference type="Pfam" id="PF01761">
    <property type="entry name" value="DHQ_synthase"/>
    <property type="match status" value="1"/>
</dbReference>
<dbReference type="Pfam" id="PF24621">
    <property type="entry name" value="DHQS_C"/>
    <property type="match status" value="1"/>
</dbReference>
<dbReference type="PIRSF" id="PIRSF001455">
    <property type="entry name" value="DHQ_synth"/>
    <property type="match status" value="1"/>
</dbReference>
<dbReference type="SUPFAM" id="SSF56796">
    <property type="entry name" value="Dehydroquinate synthase-like"/>
    <property type="match status" value="1"/>
</dbReference>
<evidence type="ECO:0000255" key="1">
    <source>
        <dbReference type="HAMAP-Rule" id="MF_00110"/>
    </source>
</evidence>
<evidence type="ECO:0000305" key="2"/>
<accession>F2MTI0</accession>
<accession>Q9ANY9</accession>
<keyword id="KW-0028">Amino-acid biosynthesis</keyword>
<keyword id="KW-0057">Aromatic amino acid biosynthesis</keyword>
<keyword id="KW-0170">Cobalt</keyword>
<keyword id="KW-0963">Cytoplasm</keyword>
<keyword id="KW-0456">Lyase</keyword>
<keyword id="KW-0479">Metal-binding</keyword>
<keyword id="KW-0520">NAD</keyword>
<keyword id="KW-0547">Nucleotide-binding</keyword>
<keyword id="KW-0862">Zinc</keyword>
<gene>
    <name evidence="1" type="primary">aroB</name>
    <name type="ordered locus">OG1RF_11282</name>
</gene>